<sequence length="179" mass="19961">MTQKVGVLAIQGGYQKHADMFKSLGVEVKLVKFNNDFDSIDRLVIPGGESTTLLNLLNKHQIFDKLYNFCSSKPVFGTCAGSIILSKGEGYLNLLDLEVQRNAYGRQVDSFVADISFNDKNITGVFIRAPKFIVVGNQVDILSKYQNSPVLLRQANILVSSFHPELTQDPTVHEYFLAM</sequence>
<comment type="function">
    <text evidence="1">Catalyzes the hydrolysis of glutamine to glutamate and ammonia as part of the biosynthesis of pyridoxal 5'-phosphate. The resulting ammonia molecule is channeled to the active site of PdxS.</text>
</comment>
<comment type="catalytic activity">
    <reaction evidence="1">
        <text>aldehydo-D-ribose 5-phosphate + D-glyceraldehyde 3-phosphate + L-glutamine = pyridoxal 5'-phosphate + L-glutamate + phosphate + 3 H2O + H(+)</text>
        <dbReference type="Rhea" id="RHEA:31507"/>
        <dbReference type="ChEBI" id="CHEBI:15377"/>
        <dbReference type="ChEBI" id="CHEBI:15378"/>
        <dbReference type="ChEBI" id="CHEBI:29985"/>
        <dbReference type="ChEBI" id="CHEBI:43474"/>
        <dbReference type="ChEBI" id="CHEBI:58273"/>
        <dbReference type="ChEBI" id="CHEBI:58359"/>
        <dbReference type="ChEBI" id="CHEBI:59776"/>
        <dbReference type="ChEBI" id="CHEBI:597326"/>
        <dbReference type="EC" id="4.3.3.6"/>
    </reaction>
</comment>
<comment type="catalytic activity">
    <reaction evidence="1">
        <text>L-glutamine + H2O = L-glutamate + NH4(+)</text>
        <dbReference type="Rhea" id="RHEA:15889"/>
        <dbReference type="ChEBI" id="CHEBI:15377"/>
        <dbReference type="ChEBI" id="CHEBI:28938"/>
        <dbReference type="ChEBI" id="CHEBI:29985"/>
        <dbReference type="ChEBI" id="CHEBI:58359"/>
        <dbReference type="EC" id="3.5.1.2"/>
    </reaction>
</comment>
<comment type="pathway">
    <text evidence="1">Cofactor biosynthesis; pyridoxal 5'-phosphate biosynthesis.</text>
</comment>
<comment type="subunit">
    <text evidence="1">In the presence of PdxS, forms a dodecamer of heterodimers. Only shows activity in the heterodimer.</text>
</comment>
<comment type="similarity">
    <text evidence="1">Belongs to the glutaminase PdxT/SNO family.</text>
</comment>
<accession>Q2A261</accession>
<evidence type="ECO:0000255" key="1">
    <source>
        <dbReference type="HAMAP-Rule" id="MF_01615"/>
    </source>
</evidence>
<protein>
    <recommendedName>
        <fullName evidence="1">Pyridoxal 5'-phosphate synthase subunit PdxT</fullName>
        <ecNumber evidence="1">4.3.3.6</ecNumber>
    </recommendedName>
    <alternativeName>
        <fullName evidence="1">Pdx2</fullName>
    </alternativeName>
    <alternativeName>
        <fullName evidence="1">Pyridoxal 5'-phosphate synthase glutaminase subunit</fullName>
        <ecNumber evidence="1">3.5.1.2</ecNumber>
    </alternativeName>
</protein>
<feature type="chain" id="PRO_0000292996" description="Pyridoxal 5'-phosphate synthase subunit PdxT">
    <location>
        <begin position="1"/>
        <end position="179"/>
    </location>
</feature>
<feature type="active site" description="Nucleophile" evidence="1">
    <location>
        <position position="79"/>
    </location>
</feature>
<feature type="active site" description="Charge relay system" evidence="1">
    <location>
        <position position="163"/>
    </location>
</feature>
<feature type="active site" description="Charge relay system" evidence="1">
    <location>
        <position position="165"/>
    </location>
</feature>
<feature type="binding site" evidence="1">
    <location>
        <begin position="48"/>
        <end position="50"/>
    </location>
    <ligand>
        <name>L-glutamine</name>
        <dbReference type="ChEBI" id="CHEBI:58359"/>
    </ligand>
</feature>
<feature type="binding site" evidence="1">
    <location>
        <position position="101"/>
    </location>
    <ligand>
        <name>L-glutamine</name>
        <dbReference type="ChEBI" id="CHEBI:58359"/>
    </ligand>
</feature>
<feature type="binding site" evidence="1">
    <location>
        <begin position="127"/>
        <end position="128"/>
    </location>
    <ligand>
        <name>L-glutamine</name>
        <dbReference type="ChEBI" id="CHEBI:58359"/>
    </ligand>
</feature>
<proteinExistence type="inferred from homology"/>
<reference key="1">
    <citation type="submission" date="2006-03" db="EMBL/GenBank/DDBJ databases">
        <title>Complete genome sequence of Francisella tularensis LVS (Live Vaccine Strain).</title>
        <authorList>
            <person name="Chain P."/>
            <person name="Larimer F."/>
            <person name="Land M."/>
            <person name="Stilwagen S."/>
            <person name="Larsson P."/>
            <person name="Bearden S."/>
            <person name="Chu M."/>
            <person name="Oyston P."/>
            <person name="Forsman M."/>
            <person name="Andersson S."/>
            <person name="Lindler L."/>
            <person name="Titball R."/>
            <person name="Garcia E."/>
        </authorList>
    </citation>
    <scope>NUCLEOTIDE SEQUENCE [LARGE SCALE GENOMIC DNA]</scope>
    <source>
        <strain>LVS</strain>
    </source>
</reference>
<keyword id="KW-0315">Glutamine amidotransferase</keyword>
<keyword id="KW-0378">Hydrolase</keyword>
<keyword id="KW-0456">Lyase</keyword>
<keyword id="KW-0663">Pyridoxal phosphate</keyword>
<keyword id="KW-1185">Reference proteome</keyword>
<name>PDXT_FRATH</name>
<dbReference type="EC" id="4.3.3.6" evidence="1"/>
<dbReference type="EC" id="3.5.1.2" evidence="1"/>
<dbReference type="EMBL" id="AM233362">
    <property type="protein sequence ID" value="CAJ79984.1"/>
    <property type="molecule type" value="Genomic_DNA"/>
</dbReference>
<dbReference type="RefSeq" id="WP_003016897.1">
    <property type="nucleotide sequence ID" value="NZ_CP009694.1"/>
</dbReference>
<dbReference type="SMR" id="Q2A261"/>
<dbReference type="MEROPS" id="C26.A32"/>
<dbReference type="KEGG" id="ftl:FTL_1545"/>
<dbReference type="UniPathway" id="UPA00245"/>
<dbReference type="Proteomes" id="UP000001944">
    <property type="component" value="Chromosome"/>
</dbReference>
<dbReference type="GO" id="GO:0005829">
    <property type="term" value="C:cytosol"/>
    <property type="evidence" value="ECO:0007669"/>
    <property type="project" value="TreeGrafter"/>
</dbReference>
<dbReference type="GO" id="GO:1903600">
    <property type="term" value="C:glutaminase complex"/>
    <property type="evidence" value="ECO:0007669"/>
    <property type="project" value="TreeGrafter"/>
</dbReference>
<dbReference type="GO" id="GO:0004359">
    <property type="term" value="F:glutaminase activity"/>
    <property type="evidence" value="ECO:0007669"/>
    <property type="project" value="UniProtKB-UniRule"/>
</dbReference>
<dbReference type="GO" id="GO:0036381">
    <property type="term" value="F:pyridoxal 5'-phosphate synthase (glutamine hydrolysing) activity"/>
    <property type="evidence" value="ECO:0007669"/>
    <property type="project" value="UniProtKB-UniRule"/>
</dbReference>
<dbReference type="GO" id="GO:0006543">
    <property type="term" value="P:glutamine catabolic process"/>
    <property type="evidence" value="ECO:0007669"/>
    <property type="project" value="UniProtKB-UniRule"/>
</dbReference>
<dbReference type="GO" id="GO:0042823">
    <property type="term" value="P:pyridoxal phosphate biosynthetic process"/>
    <property type="evidence" value="ECO:0007669"/>
    <property type="project" value="UniProtKB-UniRule"/>
</dbReference>
<dbReference type="GO" id="GO:0008614">
    <property type="term" value="P:pyridoxine metabolic process"/>
    <property type="evidence" value="ECO:0007669"/>
    <property type="project" value="TreeGrafter"/>
</dbReference>
<dbReference type="CDD" id="cd01749">
    <property type="entry name" value="GATase1_PB"/>
    <property type="match status" value="1"/>
</dbReference>
<dbReference type="Gene3D" id="3.40.50.880">
    <property type="match status" value="1"/>
</dbReference>
<dbReference type="HAMAP" id="MF_01615">
    <property type="entry name" value="PdxT"/>
    <property type="match status" value="1"/>
</dbReference>
<dbReference type="InterPro" id="IPR029062">
    <property type="entry name" value="Class_I_gatase-like"/>
</dbReference>
<dbReference type="InterPro" id="IPR002161">
    <property type="entry name" value="PdxT/SNO"/>
</dbReference>
<dbReference type="InterPro" id="IPR021196">
    <property type="entry name" value="PdxT/SNO_CS"/>
</dbReference>
<dbReference type="NCBIfam" id="TIGR03800">
    <property type="entry name" value="PLP_synth_Pdx2"/>
    <property type="match status" value="1"/>
</dbReference>
<dbReference type="NCBIfam" id="NF010050">
    <property type="entry name" value="PRK13526.1"/>
    <property type="match status" value="1"/>
</dbReference>
<dbReference type="PANTHER" id="PTHR31559">
    <property type="entry name" value="PYRIDOXAL 5'-PHOSPHATE SYNTHASE SUBUNIT SNO"/>
    <property type="match status" value="1"/>
</dbReference>
<dbReference type="PANTHER" id="PTHR31559:SF0">
    <property type="entry name" value="PYRIDOXAL 5'-PHOSPHATE SYNTHASE SUBUNIT SNO1-RELATED"/>
    <property type="match status" value="1"/>
</dbReference>
<dbReference type="Pfam" id="PF01174">
    <property type="entry name" value="SNO"/>
    <property type="match status" value="1"/>
</dbReference>
<dbReference type="PIRSF" id="PIRSF005639">
    <property type="entry name" value="Glut_amidoT_SNO"/>
    <property type="match status" value="1"/>
</dbReference>
<dbReference type="SUPFAM" id="SSF52317">
    <property type="entry name" value="Class I glutamine amidotransferase-like"/>
    <property type="match status" value="1"/>
</dbReference>
<dbReference type="PROSITE" id="PS01236">
    <property type="entry name" value="PDXT_SNO_1"/>
    <property type="match status" value="1"/>
</dbReference>
<dbReference type="PROSITE" id="PS51130">
    <property type="entry name" value="PDXT_SNO_2"/>
    <property type="match status" value="1"/>
</dbReference>
<gene>
    <name evidence="1" type="primary">pdxT</name>
    <name type="ordered locus">FTL_1545</name>
</gene>
<organism>
    <name type="scientific">Francisella tularensis subsp. holarctica (strain LVS)</name>
    <dbReference type="NCBI Taxonomy" id="376619"/>
    <lineage>
        <taxon>Bacteria</taxon>
        <taxon>Pseudomonadati</taxon>
        <taxon>Pseudomonadota</taxon>
        <taxon>Gammaproteobacteria</taxon>
        <taxon>Thiotrichales</taxon>
        <taxon>Francisellaceae</taxon>
        <taxon>Francisella</taxon>
    </lineage>
</organism>